<accession>P9WNC6</accession>
<accession>L0TDA6</accession>
<accession>O06276</accession>
<accession>P64143</accession>
<protein>
    <recommendedName>
        <fullName evidence="1">2-amino-4-hydroxy-6-hydroxymethyldihydropteridine pyrophosphokinase</fullName>
        <ecNumber evidence="1">2.7.6.3</ecNumber>
    </recommendedName>
    <alternativeName>
        <fullName evidence="1">6-hydroxymethyl-7,8-dihydropterin pyrophosphokinase</fullName>
        <shortName evidence="1">PPPK</shortName>
    </alternativeName>
    <alternativeName>
        <fullName evidence="1">7,8-dihydro-6-hydroxymethylpterin-pyrophosphokinase</fullName>
        <shortName evidence="1">HPPK</shortName>
    </alternativeName>
</protein>
<comment type="function">
    <text evidence="1">Catalyzes the transfer of pyrophosphate from adenosine triphosphate (ATP) to 6-hydroxymethyl-7,8-dihydropterin, an enzymatic step in folate biosynthesis pathway.</text>
</comment>
<comment type="catalytic activity">
    <reaction evidence="1">
        <text>6-hydroxymethyl-7,8-dihydropterin + ATP = (7,8-dihydropterin-6-yl)methyl diphosphate + AMP + H(+)</text>
        <dbReference type="Rhea" id="RHEA:11412"/>
        <dbReference type="ChEBI" id="CHEBI:15378"/>
        <dbReference type="ChEBI" id="CHEBI:30616"/>
        <dbReference type="ChEBI" id="CHEBI:44841"/>
        <dbReference type="ChEBI" id="CHEBI:72950"/>
        <dbReference type="ChEBI" id="CHEBI:456215"/>
        <dbReference type="EC" id="2.7.6.3"/>
    </reaction>
</comment>
<comment type="pathway">
    <text evidence="1">Cofactor biosynthesis; tetrahydrofolate biosynthesis; 2-amino-4-hydroxy-6-hydroxymethyl-7,8-dihydropteridine diphosphate from 7,8-dihydroneopterin triphosphate: step 4/4.</text>
</comment>
<comment type="similarity">
    <text evidence="2">Belongs to the HPPK family.</text>
</comment>
<evidence type="ECO:0000250" key="1">
    <source>
        <dbReference type="UniProtKB" id="P26281"/>
    </source>
</evidence>
<evidence type="ECO:0000305" key="2"/>
<sequence>MTRVVLSVGSNLGDRLARLRSVADGLGDALIAASPIYEADPWGGVEQGQFLNAVLIADDPTCEPREWLRRAQEFERAAGRVRGQRWGPRNLDVDLIACYQTSATEALVEVTARENHLTLPHPLAHLRAFVLIPWIAVDPTAQLTVAGCPRPVTRLLAELEPADRDSVRLFRPSFDLNSRHPVSRAPES</sequence>
<keyword id="KW-0067">ATP-binding</keyword>
<keyword id="KW-0289">Folate biosynthesis</keyword>
<keyword id="KW-0418">Kinase</keyword>
<keyword id="KW-0547">Nucleotide-binding</keyword>
<keyword id="KW-1185">Reference proteome</keyword>
<keyword id="KW-0808">Transferase</keyword>
<proteinExistence type="inferred from homology"/>
<feature type="chain" id="PRO_0000427150" description="2-amino-4-hydroxy-6-hydroxymethyldihydropteridine pyrophosphokinase">
    <location>
        <begin position="1"/>
        <end position="188"/>
    </location>
</feature>
<reference key="1">
    <citation type="journal article" date="2002" name="J. Bacteriol.">
        <title>Whole-genome comparison of Mycobacterium tuberculosis clinical and laboratory strains.</title>
        <authorList>
            <person name="Fleischmann R.D."/>
            <person name="Alland D."/>
            <person name="Eisen J.A."/>
            <person name="Carpenter L."/>
            <person name="White O."/>
            <person name="Peterson J.D."/>
            <person name="DeBoy R.T."/>
            <person name="Dodson R.J."/>
            <person name="Gwinn M.L."/>
            <person name="Haft D.H."/>
            <person name="Hickey E.K."/>
            <person name="Kolonay J.F."/>
            <person name="Nelson W.C."/>
            <person name="Umayam L.A."/>
            <person name="Ermolaeva M.D."/>
            <person name="Salzberg S.L."/>
            <person name="Delcher A."/>
            <person name="Utterback T.R."/>
            <person name="Weidman J.F."/>
            <person name="Khouri H.M."/>
            <person name="Gill J."/>
            <person name="Mikula A."/>
            <person name="Bishai W."/>
            <person name="Jacobs W.R. Jr."/>
            <person name="Venter J.C."/>
            <person name="Fraser C.M."/>
        </authorList>
    </citation>
    <scope>NUCLEOTIDE SEQUENCE [LARGE SCALE GENOMIC DNA]</scope>
    <source>
        <strain>CDC 1551 / Oshkosh</strain>
    </source>
</reference>
<gene>
    <name type="primary">folK</name>
    <name type="ordered locus">MT3711</name>
</gene>
<dbReference type="EC" id="2.7.6.3" evidence="1"/>
<dbReference type="EMBL" id="AE000516">
    <property type="protein sequence ID" value="AAK48069.1"/>
    <property type="molecule type" value="Genomic_DNA"/>
</dbReference>
<dbReference type="PIR" id="G70955">
    <property type="entry name" value="G70955"/>
</dbReference>
<dbReference type="RefSeq" id="WP_003419536.1">
    <property type="nucleotide sequence ID" value="NZ_KK341227.1"/>
</dbReference>
<dbReference type="SMR" id="P9WNC6"/>
<dbReference type="DrugCentral" id="P9WNC6"/>
<dbReference type="GeneID" id="45427592"/>
<dbReference type="KEGG" id="mtc:MT3711"/>
<dbReference type="PATRIC" id="fig|83331.31.peg.3994"/>
<dbReference type="HOGENOM" id="CLU_097916_0_0_11"/>
<dbReference type="UniPathway" id="UPA00077">
    <property type="reaction ID" value="UER00155"/>
</dbReference>
<dbReference type="Proteomes" id="UP000001020">
    <property type="component" value="Chromosome"/>
</dbReference>
<dbReference type="GO" id="GO:0003848">
    <property type="term" value="F:2-amino-4-hydroxy-6-hydroxymethyldihydropteridine diphosphokinase activity"/>
    <property type="evidence" value="ECO:0007669"/>
    <property type="project" value="UniProtKB-EC"/>
</dbReference>
<dbReference type="GO" id="GO:0005524">
    <property type="term" value="F:ATP binding"/>
    <property type="evidence" value="ECO:0007669"/>
    <property type="project" value="UniProtKB-KW"/>
</dbReference>
<dbReference type="GO" id="GO:0016301">
    <property type="term" value="F:kinase activity"/>
    <property type="evidence" value="ECO:0007669"/>
    <property type="project" value="UniProtKB-KW"/>
</dbReference>
<dbReference type="GO" id="GO:0046656">
    <property type="term" value="P:folic acid biosynthetic process"/>
    <property type="evidence" value="ECO:0007669"/>
    <property type="project" value="UniProtKB-KW"/>
</dbReference>
<dbReference type="GO" id="GO:0046654">
    <property type="term" value="P:tetrahydrofolate biosynthetic process"/>
    <property type="evidence" value="ECO:0007669"/>
    <property type="project" value="UniProtKB-UniPathway"/>
</dbReference>
<dbReference type="CDD" id="cd00483">
    <property type="entry name" value="HPPK"/>
    <property type="match status" value="1"/>
</dbReference>
<dbReference type="Gene3D" id="3.30.70.560">
    <property type="entry name" value="7,8-Dihydro-6-hydroxymethylpterin-pyrophosphokinase HPPK"/>
    <property type="match status" value="1"/>
</dbReference>
<dbReference type="InterPro" id="IPR000550">
    <property type="entry name" value="Hppk"/>
</dbReference>
<dbReference type="InterPro" id="IPR035907">
    <property type="entry name" value="Hppk_sf"/>
</dbReference>
<dbReference type="NCBIfam" id="TIGR01498">
    <property type="entry name" value="folK"/>
    <property type="match status" value="1"/>
</dbReference>
<dbReference type="PANTHER" id="PTHR43071">
    <property type="entry name" value="2-AMINO-4-HYDROXY-6-HYDROXYMETHYLDIHYDROPTERIDINE PYROPHOSPHOKINASE"/>
    <property type="match status" value="1"/>
</dbReference>
<dbReference type="PANTHER" id="PTHR43071:SF1">
    <property type="entry name" value="2-AMINO-4-HYDROXY-6-HYDROXYMETHYLDIHYDROPTERIDINE PYROPHOSPHOKINASE"/>
    <property type="match status" value="1"/>
</dbReference>
<dbReference type="Pfam" id="PF01288">
    <property type="entry name" value="HPPK"/>
    <property type="match status" value="1"/>
</dbReference>
<dbReference type="SUPFAM" id="SSF55083">
    <property type="entry name" value="6-hydroxymethyl-7,8-dihydropterin pyrophosphokinase, HPPK"/>
    <property type="match status" value="1"/>
</dbReference>
<dbReference type="PROSITE" id="PS00794">
    <property type="entry name" value="HPPK"/>
    <property type="match status" value="1"/>
</dbReference>
<organism>
    <name type="scientific">Mycobacterium tuberculosis (strain CDC 1551 / Oshkosh)</name>
    <dbReference type="NCBI Taxonomy" id="83331"/>
    <lineage>
        <taxon>Bacteria</taxon>
        <taxon>Bacillati</taxon>
        <taxon>Actinomycetota</taxon>
        <taxon>Actinomycetes</taxon>
        <taxon>Mycobacteriales</taxon>
        <taxon>Mycobacteriaceae</taxon>
        <taxon>Mycobacterium</taxon>
        <taxon>Mycobacterium tuberculosis complex</taxon>
    </lineage>
</organism>
<name>HPPK_MYCTO</name>